<organism>
    <name type="scientific">Homo sapiens</name>
    <name type="common">Human</name>
    <dbReference type="NCBI Taxonomy" id="9606"/>
    <lineage>
        <taxon>Eukaryota</taxon>
        <taxon>Metazoa</taxon>
        <taxon>Chordata</taxon>
        <taxon>Craniata</taxon>
        <taxon>Vertebrata</taxon>
        <taxon>Euteleostomi</taxon>
        <taxon>Mammalia</taxon>
        <taxon>Eutheria</taxon>
        <taxon>Euarchontoglires</taxon>
        <taxon>Primates</taxon>
        <taxon>Haplorrhini</taxon>
        <taxon>Catarrhini</taxon>
        <taxon>Hominidae</taxon>
        <taxon>Homo</taxon>
    </lineage>
</organism>
<dbReference type="EMBL" id="AK023213">
    <property type="protein sequence ID" value="BAB14466.1"/>
    <property type="molecule type" value="mRNA"/>
</dbReference>
<dbReference type="EMBL" id="AK001673">
    <property type="protein sequence ID" value="BAA91826.1"/>
    <property type="molecule type" value="mRNA"/>
</dbReference>
<dbReference type="EMBL" id="BC053325">
    <property type="protein sequence ID" value="AAH53325.1"/>
    <property type="molecule type" value="mRNA"/>
</dbReference>
<dbReference type="CCDS" id="CCDS9830.1"/>
<dbReference type="RefSeq" id="NP_060698.2">
    <property type="nucleotide sequence ID" value="NM_018228.3"/>
</dbReference>
<dbReference type="RefSeq" id="XP_011535213.1">
    <property type="nucleotide sequence ID" value="XM_011536911.3"/>
</dbReference>
<dbReference type="RefSeq" id="XP_054232280.1">
    <property type="nucleotide sequence ID" value="XM_054376305.1"/>
</dbReference>
<dbReference type="BioGRID" id="120530">
    <property type="interactions" value="20"/>
</dbReference>
<dbReference type="FunCoup" id="Q9H8Y1">
    <property type="interactions" value="152"/>
</dbReference>
<dbReference type="IntAct" id="Q9H8Y1">
    <property type="interactions" value="15"/>
</dbReference>
<dbReference type="STRING" id="9606.ENSP00000256362"/>
<dbReference type="GlyGen" id="Q9H8Y1">
    <property type="glycosylation" value="1 site, 1 O-linked glycan (1 site)"/>
</dbReference>
<dbReference type="iPTMnet" id="Q9H8Y1"/>
<dbReference type="PhosphoSitePlus" id="Q9H8Y1"/>
<dbReference type="BioMuta" id="VRTN"/>
<dbReference type="DMDM" id="41016925"/>
<dbReference type="jPOST" id="Q9H8Y1"/>
<dbReference type="MassIVE" id="Q9H8Y1"/>
<dbReference type="PaxDb" id="9606-ENSP00000256362"/>
<dbReference type="PeptideAtlas" id="Q9H8Y1"/>
<dbReference type="ProteomicsDB" id="81255"/>
<dbReference type="Antibodypedia" id="7">
    <property type="antibodies" value="42 antibodies from 14 providers"/>
</dbReference>
<dbReference type="DNASU" id="55237"/>
<dbReference type="Ensembl" id="ENST00000256362.5">
    <property type="protein sequence ID" value="ENSP00000256362.4"/>
    <property type="gene ID" value="ENSG00000133980.5"/>
</dbReference>
<dbReference type="GeneID" id="55237"/>
<dbReference type="KEGG" id="hsa:55237"/>
<dbReference type="MANE-Select" id="ENST00000256362.5">
    <property type="protein sequence ID" value="ENSP00000256362.4"/>
    <property type="RefSeq nucleotide sequence ID" value="NM_018228.3"/>
    <property type="RefSeq protein sequence ID" value="NP_060698.2"/>
</dbReference>
<dbReference type="UCSC" id="uc001xpw.5">
    <property type="organism name" value="human"/>
</dbReference>
<dbReference type="AGR" id="HGNC:20223"/>
<dbReference type="CTD" id="55237"/>
<dbReference type="DisGeNET" id="55237"/>
<dbReference type="GeneCards" id="VRTN"/>
<dbReference type="HGNC" id="HGNC:20223">
    <property type="gene designation" value="VRTN"/>
</dbReference>
<dbReference type="HPA" id="ENSG00000133980">
    <property type="expression patterns" value="Tissue enhanced (epididymis, testis)"/>
</dbReference>
<dbReference type="MIM" id="620468">
    <property type="type" value="gene"/>
</dbReference>
<dbReference type="neXtProt" id="NX_Q9H8Y1"/>
<dbReference type="OpenTargets" id="ENSG00000133980"/>
<dbReference type="PharmGKB" id="PA134899928"/>
<dbReference type="VEuPathDB" id="HostDB:ENSG00000133980"/>
<dbReference type="eggNOG" id="ENOG502SC23">
    <property type="taxonomic scope" value="Eukaryota"/>
</dbReference>
<dbReference type="GeneTree" id="ENSGT00390000007874"/>
<dbReference type="HOGENOM" id="CLU_429970_0_0_1"/>
<dbReference type="InParanoid" id="Q9H8Y1"/>
<dbReference type="OMA" id="RRCDHVP"/>
<dbReference type="OrthoDB" id="9869831at2759"/>
<dbReference type="PAN-GO" id="Q9H8Y1">
    <property type="GO annotations" value="2 GO annotations based on evolutionary models"/>
</dbReference>
<dbReference type="PhylomeDB" id="Q9H8Y1"/>
<dbReference type="TreeFam" id="TF332015"/>
<dbReference type="PathwayCommons" id="Q9H8Y1"/>
<dbReference type="SignaLink" id="Q9H8Y1"/>
<dbReference type="BioGRID-ORCS" id="55237">
    <property type="hits" value="21 hits in 1143 CRISPR screens"/>
</dbReference>
<dbReference type="ChiTaRS" id="VRTN">
    <property type="organism name" value="human"/>
</dbReference>
<dbReference type="GenomeRNAi" id="55237"/>
<dbReference type="Pharos" id="Q9H8Y1">
    <property type="development level" value="Tdark"/>
</dbReference>
<dbReference type="PRO" id="PR:Q9H8Y1"/>
<dbReference type="Proteomes" id="UP000005640">
    <property type="component" value="Chromosome 14"/>
</dbReference>
<dbReference type="RNAct" id="Q9H8Y1">
    <property type="molecule type" value="protein"/>
</dbReference>
<dbReference type="Bgee" id="ENSG00000133980">
    <property type="expression patterns" value="Expressed in buccal mucosa cell and 25 other cell types or tissues"/>
</dbReference>
<dbReference type="ExpressionAtlas" id="Q9H8Y1">
    <property type="expression patterns" value="baseline and differential"/>
</dbReference>
<dbReference type="GO" id="GO:0000785">
    <property type="term" value="C:chromatin"/>
    <property type="evidence" value="ECO:0000318"/>
    <property type="project" value="GO_Central"/>
</dbReference>
<dbReference type="GO" id="GO:0005634">
    <property type="term" value="C:nucleus"/>
    <property type="evidence" value="ECO:0000250"/>
    <property type="project" value="UniProtKB"/>
</dbReference>
<dbReference type="GO" id="GO:0043565">
    <property type="term" value="F:sequence-specific DNA binding"/>
    <property type="evidence" value="ECO:0007669"/>
    <property type="project" value="InterPro"/>
</dbReference>
<dbReference type="GO" id="GO:0006357">
    <property type="term" value="P:regulation of transcription by RNA polymerase II"/>
    <property type="evidence" value="ECO:0000250"/>
    <property type="project" value="UniProtKB"/>
</dbReference>
<dbReference type="CDD" id="cd22791">
    <property type="entry name" value="OTU_VRTN"/>
    <property type="match status" value="1"/>
</dbReference>
<dbReference type="InterPro" id="IPR010921">
    <property type="entry name" value="Trp_repressor/repl_initiator"/>
</dbReference>
<dbReference type="InterPro" id="IPR038822">
    <property type="entry name" value="Vertnin-like"/>
</dbReference>
<dbReference type="InterPro" id="IPR047273">
    <property type="entry name" value="VRTN_OTU_dom"/>
</dbReference>
<dbReference type="PANTHER" id="PTHR16081">
    <property type="entry name" value="VERTNIN"/>
    <property type="match status" value="1"/>
</dbReference>
<dbReference type="PANTHER" id="PTHR16081:SF0">
    <property type="entry name" value="VERTNIN"/>
    <property type="match status" value="1"/>
</dbReference>
<dbReference type="SUPFAM" id="SSF48295">
    <property type="entry name" value="TrpR-like"/>
    <property type="match status" value="1"/>
</dbReference>
<accession>Q9H8Y1</accession>
<accession>Q9NVC7</accession>
<proteinExistence type="evidence at protein level"/>
<gene>
    <name evidence="6" type="primary">VRTN</name>
    <name type="synonym">C14orf115</name>
</gene>
<feature type="chain" id="PRO_0000089926" description="Vertnin">
    <location>
        <begin position="1"/>
        <end position="702"/>
    </location>
</feature>
<feature type="region of interest" description="Disordered" evidence="3">
    <location>
        <begin position="562"/>
        <end position="625"/>
    </location>
</feature>
<feature type="compositionally biased region" description="Basic and acidic residues" evidence="3">
    <location>
        <begin position="570"/>
        <end position="582"/>
    </location>
</feature>
<feature type="sequence variant" id="VAR_050876" description="In dbSNP:rs2232032.">
    <original>L</original>
    <variation>F</variation>
    <location>
        <position position="53"/>
    </location>
</feature>
<feature type="sequence variant" id="VAR_035677" description="In a colorectal cancer sample; somatic mutation; dbSNP:rs773509797." evidence="4">
    <original>V</original>
    <variation>M</variation>
    <location>
        <position position="133"/>
    </location>
</feature>
<feature type="sequence conflict" description="In Ref. 1; BAA91826." evidence="5" ref="1">
    <original>A</original>
    <variation>V</variation>
    <location>
        <position position="349"/>
    </location>
</feature>
<reference key="1">
    <citation type="journal article" date="2004" name="Nat. Genet.">
        <title>Complete sequencing and characterization of 21,243 full-length human cDNAs.</title>
        <authorList>
            <person name="Ota T."/>
            <person name="Suzuki Y."/>
            <person name="Nishikawa T."/>
            <person name="Otsuki T."/>
            <person name="Sugiyama T."/>
            <person name="Irie R."/>
            <person name="Wakamatsu A."/>
            <person name="Hayashi K."/>
            <person name="Sato H."/>
            <person name="Nagai K."/>
            <person name="Kimura K."/>
            <person name="Makita H."/>
            <person name="Sekine M."/>
            <person name="Obayashi M."/>
            <person name="Nishi T."/>
            <person name="Shibahara T."/>
            <person name="Tanaka T."/>
            <person name="Ishii S."/>
            <person name="Yamamoto J."/>
            <person name="Saito K."/>
            <person name="Kawai Y."/>
            <person name="Isono Y."/>
            <person name="Nakamura Y."/>
            <person name="Nagahari K."/>
            <person name="Murakami K."/>
            <person name="Yasuda T."/>
            <person name="Iwayanagi T."/>
            <person name="Wagatsuma M."/>
            <person name="Shiratori A."/>
            <person name="Sudo H."/>
            <person name="Hosoiri T."/>
            <person name="Kaku Y."/>
            <person name="Kodaira H."/>
            <person name="Kondo H."/>
            <person name="Sugawara M."/>
            <person name="Takahashi M."/>
            <person name="Kanda K."/>
            <person name="Yokoi T."/>
            <person name="Furuya T."/>
            <person name="Kikkawa E."/>
            <person name="Omura Y."/>
            <person name="Abe K."/>
            <person name="Kamihara K."/>
            <person name="Katsuta N."/>
            <person name="Sato K."/>
            <person name="Tanikawa M."/>
            <person name="Yamazaki M."/>
            <person name="Ninomiya K."/>
            <person name="Ishibashi T."/>
            <person name="Yamashita H."/>
            <person name="Murakawa K."/>
            <person name="Fujimori K."/>
            <person name="Tanai H."/>
            <person name="Kimata M."/>
            <person name="Watanabe M."/>
            <person name="Hiraoka S."/>
            <person name="Chiba Y."/>
            <person name="Ishida S."/>
            <person name="Ono Y."/>
            <person name="Takiguchi S."/>
            <person name="Watanabe S."/>
            <person name="Yosida M."/>
            <person name="Hotuta T."/>
            <person name="Kusano J."/>
            <person name="Kanehori K."/>
            <person name="Takahashi-Fujii A."/>
            <person name="Hara H."/>
            <person name="Tanase T.-O."/>
            <person name="Nomura Y."/>
            <person name="Togiya S."/>
            <person name="Komai F."/>
            <person name="Hara R."/>
            <person name="Takeuchi K."/>
            <person name="Arita M."/>
            <person name="Imose N."/>
            <person name="Musashino K."/>
            <person name="Yuuki H."/>
            <person name="Oshima A."/>
            <person name="Sasaki N."/>
            <person name="Aotsuka S."/>
            <person name="Yoshikawa Y."/>
            <person name="Matsunawa H."/>
            <person name="Ichihara T."/>
            <person name="Shiohata N."/>
            <person name="Sano S."/>
            <person name="Moriya S."/>
            <person name="Momiyama H."/>
            <person name="Satoh N."/>
            <person name="Takami S."/>
            <person name="Terashima Y."/>
            <person name="Suzuki O."/>
            <person name="Nakagawa S."/>
            <person name="Senoh A."/>
            <person name="Mizoguchi H."/>
            <person name="Goto Y."/>
            <person name="Shimizu F."/>
            <person name="Wakebe H."/>
            <person name="Hishigaki H."/>
            <person name="Watanabe T."/>
            <person name="Sugiyama A."/>
            <person name="Takemoto M."/>
            <person name="Kawakami B."/>
            <person name="Yamazaki M."/>
            <person name="Watanabe K."/>
            <person name="Kumagai A."/>
            <person name="Itakura S."/>
            <person name="Fukuzumi Y."/>
            <person name="Fujimori Y."/>
            <person name="Komiyama M."/>
            <person name="Tashiro H."/>
            <person name="Tanigami A."/>
            <person name="Fujiwara T."/>
            <person name="Ono T."/>
            <person name="Yamada K."/>
            <person name="Fujii Y."/>
            <person name="Ozaki K."/>
            <person name="Hirao M."/>
            <person name="Ohmori Y."/>
            <person name="Kawabata A."/>
            <person name="Hikiji T."/>
            <person name="Kobatake N."/>
            <person name="Inagaki H."/>
            <person name="Ikema Y."/>
            <person name="Okamoto S."/>
            <person name="Okitani R."/>
            <person name="Kawakami T."/>
            <person name="Noguchi S."/>
            <person name="Itoh T."/>
            <person name="Shigeta K."/>
            <person name="Senba T."/>
            <person name="Matsumura K."/>
            <person name="Nakajima Y."/>
            <person name="Mizuno T."/>
            <person name="Morinaga M."/>
            <person name="Sasaki M."/>
            <person name="Togashi T."/>
            <person name="Oyama M."/>
            <person name="Hata H."/>
            <person name="Watanabe M."/>
            <person name="Komatsu T."/>
            <person name="Mizushima-Sugano J."/>
            <person name="Satoh T."/>
            <person name="Shirai Y."/>
            <person name="Takahashi Y."/>
            <person name="Nakagawa K."/>
            <person name="Okumura K."/>
            <person name="Nagase T."/>
            <person name="Nomura N."/>
            <person name="Kikuchi H."/>
            <person name="Masuho Y."/>
            <person name="Yamashita R."/>
            <person name="Nakai K."/>
            <person name="Yada T."/>
            <person name="Nakamura Y."/>
            <person name="Ohara O."/>
            <person name="Isogai T."/>
            <person name="Sugano S."/>
        </authorList>
    </citation>
    <scope>NUCLEOTIDE SEQUENCE [LARGE SCALE MRNA]</scope>
</reference>
<reference key="2">
    <citation type="journal article" date="2004" name="Genome Res.">
        <title>The status, quality, and expansion of the NIH full-length cDNA project: the Mammalian Gene Collection (MGC).</title>
        <authorList>
            <consortium name="The MGC Project Team"/>
        </authorList>
    </citation>
    <scope>NUCLEOTIDE SEQUENCE [LARGE SCALE MRNA]</scope>
    <source>
        <tissue>Ovary</tissue>
    </source>
</reference>
<reference key="3">
    <citation type="journal article" date="2011" name="Sci. Signal.">
        <title>System-wide temporal characterization of the proteome and phosphoproteome of human embryonic stem cell differentiation.</title>
        <authorList>
            <person name="Rigbolt K.T."/>
            <person name="Prokhorova T.A."/>
            <person name="Akimov V."/>
            <person name="Henningsen J."/>
            <person name="Johansen P.T."/>
            <person name="Kratchmarova I."/>
            <person name="Kassem M."/>
            <person name="Mann M."/>
            <person name="Olsen J.V."/>
            <person name="Blagoev B."/>
        </authorList>
    </citation>
    <scope>IDENTIFICATION BY MASS SPECTROMETRY [LARGE SCALE ANALYSIS]</scope>
</reference>
<reference key="4">
    <citation type="journal article" date="2006" name="Science">
        <title>The consensus coding sequences of human breast and colorectal cancers.</title>
        <authorList>
            <person name="Sjoeblom T."/>
            <person name="Jones S."/>
            <person name="Wood L.D."/>
            <person name="Parsons D.W."/>
            <person name="Lin J."/>
            <person name="Barber T.D."/>
            <person name="Mandelker D."/>
            <person name="Leary R.J."/>
            <person name="Ptak J."/>
            <person name="Silliman N."/>
            <person name="Szabo S."/>
            <person name="Buckhaults P."/>
            <person name="Farrell C."/>
            <person name="Meeh P."/>
            <person name="Markowitz S.D."/>
            <person name="Willis J."/>
            <person name="Dawson D."/>
            <person name="Willson J.K.V."/>
            <person name="Gazdar A.F."/>
            <person name="Hartigan J."/>
            <person name="Wu L."/>
            <person name="Liu C."/>
            <person name="Parmigiani G."/>
            <person name="Park B.H."/>
            <person name="Bachman K.E."/>
            <person name="Papadopoulos N."/>
            <person name="Vogelstein B."/>
            <person name="Kinzler K.W."/>
            <person name="Velculescu V.E."/>
        </authorList>
    </citation>
    <scope>VARIANT [LARGE SCALE ANALYSIS] MET-133</scope>
</reference>
<comment type="function">
    <text evidence="2">Acts as a transcription factor that regulates development of thoracic vertebrae.</text>
</comment>
<comment type="interaction">
    <interactant intactId="EBI-12894399">
        <id>Q9H8Y1</id>
    </interactant>
    <interactant intactId="EBI-2961725">
        <id>Q96LT7</id>
        <label>C9orf72</label>
    </interactant>
    <organismsDiffer>false</organismsDiffer>
    <experiments>6</experiments>
</comment>
<comment type="interaction">
    <interactant intactId="EBI-12894399">
        <id>Q9H8Y1</id>
    </interactant>
    <interactant intactId="EBI-10171902">
        <id>P56545-3</id>
        <label>CTBP2</label>
    </interactant>
    <organismsDiffer>false</organismsDiffer>
    <experiments>5</experiments>
</comment>
<comment type="interaction">
    <interactant intactId="EBI-12894399">
        <id>Q9H8Y1</id>
    </interactant>
    <interactant intactId="EBI-299104">
        <id>P38919</id>
        <label>EIF4A3</label>
    </interactant>
    <organismsDiffer>false</organismsDiffer>
    <experiments>3</experiments>
</comment>
<comment type="interaction">
    <interactant intactId="EBI-12894399">
        <id>Q9H8Y1</id>
    </interactant>
    <interactant intactId="EBI-6658203">
        <id>Q86YD7</id>
        <label>FAM90A1</label>
    </interactant>
    <organismsDiffer>false</organismsDiffer>
    <experiments>3</experiments>
</comment>
<comment type="interaction">
    <interactant intactId="EBI-12894399">
        <id>Q9H8Y1</id>
    </interactant>
    <interactant intactId="EBI-5452779">
        <id>Q9BUI4</id>
        <label>POLR3C</label>
    </interactant>
    <organismsDiffer>false</organismsDiffer>
    <experiments>3</experiments>
</comment>
<comment type="interaction">
    <interactant intactId="EBI-12894399">
        <id>Q9H8Y1</id>
    </interactant>
    <interactant intactId="EBI-5542466">
        <id>Q8WUD1</id>
        <label>RAB2B</label>
    </interactant>
    <organismsDiffer>false</organismsDiffer>
    <experiments>5</experiments>
</comment>
<comment type="interaction">
    <interactant intactId="EBI-12894399">
        <id>Q9H8Y1</id>
    </interactant>
    <interactant intactId="EBI-1045943">
        <id>P20336</id>
        <label>RAB3A</label>
    </interactant>
    <organismsDiffer>false</organismsDiffer>
    <experiments>5</experiments>
</comment>
<comment type="interaction">
    <interactant intactId="EBI-12894399">
        <id>Q9H8Y1</id>
    </interactant>
    <interactant intactId="EBI-12894629">
        <id>P20337</id>
        <label>RAB3B</label>
    </interactant>
    <organismsDiffer>false</organismsDiffer>
    <experiments>3</experiments>
</comment>
<comment type="interaction">
    <interactant intactId="EBI-12894399">
        <id>Q9H8Y1</id>
    </interactant>
    <interactant intactId="EBI-4287022">
        <id>Q96E17</id>
        <label>RAB3C</label>
    </interactant>
    <organismsDiffer>false</organismsDiffer>
    <experiments>3</experiments>
</comment>
<comment type="interaction">
    <interactant intactId="EBI-12894399">
        <id>Q9H8Y1</id>
    </interactant>
    <interactant intactId="EBI-3386067">
        <id>O95716</id>
        <label>RAB3D</label>
    </interactant>
    <organismsDiffer>false</organismsDiffer>
    <experiments>3</experiments>
</comment>
<comment type="subcellular location">
    <subcellularLocation>
        <location evidence="1">Nucleus</location>
    </subcellularLocation>
</comment>
<comment type="similarity">
    <text evidence="5">Belongs to the vertnin family.</text>
</comment>
<protein>
    <recommendedName>
        <fullName>Vertnin</fullName>
    </recommendedName>
</protein>
<evidence type="ECO:0000250" key="1">
    <source>
        <dbReference type="UniProtKB" id="E1CHH8"/>
    </source>
</evidence>
<evidence type="ECO:0000250" key="2">
    <source>
        <dbReference type="UniProtKB" id="Q3SYK4"/>
    </source>
</evidence>
<evidence type="ECO:0000256" key="3">
    <source>
        <dbReference type="SAM" id="MobiDB-lite"/>
    </source>
</evidence>
<evidence type="ECO:0000269" key="4">
    <source>
    </source>
</evidence>
<evidence type="ECO:0000305" key="5"/>
<evidence type="ECO:0000312" key="6">
    <source>
        <dbReference type="HGNC" id="HGNC:20223"/>
    </source>
</evidence>
<sequence length="702" mass="78260">MTSRNQLVQKVLQELQEAVECEGLEGLIGASLEAKQVLSSFTLPTCREGGPGLQVLEVDSVALSLYPEDAPRNMLPLVCKGEGSLLFEAASMLLWGDAGLSLELRARTVVEMLLHRHYYLQGMIDSKVMLQAVRYSLCSEESPEMTSLPPATLEAIFDADVKASCFPSSFSNVWHLYALASVLQRNIYSIYPMRNLKIRPYFNRVIRPRRCDHVPSTLHIMWAGQPLTSHFFRHQYFAPVVGLEEVEAEGAPGVAPALPALAPLSSPAKTLELLNREPGLSYSHLCERYSVTKSTFYRWRRQSQEHRQKVAARFSAKHFLQDSFHRGGVVPLQQFLQRFPEISRSTYYAWKHELLGSGTCPALPPREVLGMEELEKLPEEQVAEEELECSALAVSSPGMVLMQRAKLYLEHCISLNTLVPYRCFKRRFPGISRSTYYNWRRKALRRNPSFKPAPALSAAGTPQLASVGEGAVIPWKSEAEEGAGNATGEDPPAPGELLPLRMPLSRWQRRLRRAARRQVLSGHLPFCRFRLRYPSLSPSAFWVWKSLARGWPRGLSKLQVPVPTLGKGGQEAEEKQEKEAGRDVTAVMAPPVGASSEDVEGGPSREGALQEGATAQGQPHSGPLLSQPVVAAAGGRDGRMLVMDMIATTKFKAQAKLFLQKRFQSKSFPSYKEFSALFPLTARSTYYMWKRALYDGLTLVDG</sequence>
<keyword id="KW-0217">Developmental protein</keyword>
<keyword id="KW-0238">DNA-binding</keyword>
<keyword id="KW-0539">Nucleus</keyword>
<keyword id="KW-1267">Proteomics identification</keyword>
<keyword id="KW-1185">Reference proteome</keyword>
<keyword id="KW-0804">Transcription</keyword>
<keyword id="KW-0805">Transcription regulation</keyword>
<name>VRTN_HUMAN</name>